<proteinExistence type="evidence at protein level"/>
<keyword id="KW-0106">Calcium</keyword>
<keyword id="KW-0903">Direct protein sequencing</keyword>
<keyword id="KW-0479">Metal-binding</keyword>
<keyword id="KW-0514">Muscle protein</keyword>
<keyword id="KW-0677">Repeat</keyword>
<feature type="chain" id="PRO_0000073632" description="Sarcoplasmic calcium-binding proteins I, III, and IV">
    <location>
        <begin position="1"/>
        <end position="185"/>
    </location>
</feature>
<feature type="domain" description="EF-hand 1" evidence="1">
    <location>
        <begin position="5"/>
        <end position="41"/>
    </location>
</feature>
<feature type="domain" description="EF-hand 2" evidence="1">
    <location>
        <begin position="57"/>
        <end position="92"/>
    </location>
</feature>
<feature type="domain" description="EF-hand 3" evidence="1">
    <location>
        <begin position="102"/>
        <end position="137"/>
    </location>
</feature>
<feature type="domain" description="EF-hand 4" evidence="1">
    <location>
        <begin position="138"/>
        <end position="173"/>
    </location>
</feature>
<feature type="binding site" evidence="1">
    <location>
        <position position="19"/>
    </location>
    <ligand>
        <name>Ca(2+)</name>
        <dbReference type="ChEBI" id="CHEBI:29108"/>
        <label>1</label>
    </ligand>
</feature>
<feature type="binding site" evidence="1">
    <location>
        <position position="21"/>
    </location>
    <ligand>
        <name>Ca(2+)</name>
        <dbReference type="ChEBI" id="CHEBI:29108"/>
        <label>1</label>
    </ligand>
</feature>
<feature type="binding site" evidence="1">
    <location>
        <position position="23"/>
    </location>
    <ligand>
        <name>Ca(2+)</name>
        <dbReference type="ChEBI" id="CHEBI:29108"/>
        <label>1</label>
    </ligand>
</feature>
<feature type="binding site" evidence="1">
    <location>
        <position position="25"/>
    </location>
    <ligand>
        <name>Ca(2+)</name>
        <dbReference type="ChEBI" id="CHEBI:29108"/>
        <label>1</label>
    </ligand>
</feature>
<feature type="binding site" evidence="1">
    <location>
        <position position="30"/>
    </location>
    <ligand>
        <name>Ca(2+)</name>
        <dbReference type="ChEBI" id="CHEBI:29108"/>
        <label>1</label>
    </ligand>
</feature>
<feature type="binding site" evidence="1">
    <location>
        <position position="70"/>
    </location>
    <ligand>
        <name>Ca(2+)</name>
        <dbReference type="ChEBI" id="CHEBI:29108"/>
        <label>2</label>
    </ligand>
</feature>
<feature type="binding site" evidence="1">
    <location>
        <position position="72"/>
    </location>
    <ligand>
        <name>Ca(2+)</name>
        <dbReference type="ChEBI" id="CHEBI:29108"/>
        <label>2</label>
    </ligand>
</feature>
<feature type="binding site" evidence="1">
    <location>
        <position position="74"/>
    </location>
    <ligand>
        <name>Ca(2+)</name>
        <dbReference type="ChEBI" id="CHEBI:29108"/>
        <label>2</label>
    </ligand>
</feature>
<feature type="binding site" evidence="1">
    <location>
        <position position="81"/>
    </location>
    <ligand>
        <name>Ca(2+)</name>
        <dbReference type="ChEBI" id="CHEBI:29108"/>
        <label>2</label>
    </ligand>
</feature>
<feature type="binding site" evidence="1">
    <location>
        <position position="115"/>
    </location>
    <ligand>
        <name>Ca(2+)</name>
        <dbReference type="ChEBI" id="CHEBI:29108"/>
        <label>3</label>
    </ligand>
</feature>
<feature type="binding site" evidence="1">
    <location>
        <position position="117"/>
    </location>
    <ligand>
        <name>Ca(2+)</name>
        <dbReference type="ChEBI" id="CHEBI:29108"/>
        <label>3</label>
    </ligand>
</feature>
<feature type="binding site" evidence="1">
    <location>
        <position position="119"/>
    </location>
    <ligand>
        <name>Ca(2+)</name>
        <dbReference type="ChEBI" id="CHEBI:29108"/>
        <label>3</label>
    </ligand>
</feature>
<feature type="binding site" evidence="1">
    <location>
        <position position="126"/>
    </location>
    <ligand>
        <name>Ca(2+)</name>
        <dbReference type="ChEBI" id="CHEBI:29108"/>
        <label>3</label>
    </ligand>
</feature>
<feature type="sequence variant" description="In SCP III.">
    <original>Y</original>
    <variation>M</variation>
    <location>
        <position position="20"/>
    </location>
</feature>
<feature type="sequence variant" description="In SCP IV.">
    <original>D</original>
    <variation>N</variation>
    <location>
        <position position="23"/>
    </location>
</feature>
<organism>
    <name type="scientific">Branchiostoma lanceolatum</name>
    <name type="common">Common lancelet</name>
    <name type="synonym">Amphioxus lanceolatum</name>
    <dbReference type="NCBI Taxonomy" id="7740"/>
    <lineage>
        <taxon>Eukaryota</taxon>
        <taxon>Metazoa</taxon>
        <taxon>Chordata</taxon>
        <taxon>Cephalochordata</taxon>
        <taxon>Leptocardii</taxon>
        <taxon>Amphioxiformes</taxon>
        <taxon>Branchiostomatidae</taxon>
        <taxon>Branchiostoma</taxon>
    </lineage>
</organism>
<name>SCP1_BRALA</name>
<comment type="function">
    <text>Like parvalbumins, SCPs seem to be more abundant in fast contracting muscles, but no functional relationship can be established from this distribution.</text>
</comment>
<comment type="miscellaneous">
    <text>The sarcoplasmic calcium-binding proteins are abundant in the muscle of arthropods, mollusks, annelids, and protochordates.</text>
</comment>
<comment type="miscellaneous">
    <text>This protein has three functional calcium-binding sites; potential site 4 has lost affinity for calcium.</text>
</comment>
<comment type="miscellaneous">
    <text>There are 7 different SCP's in amphioxus. The sequence shown here is that of SCP I.</text>
</comment>
<sequence length="185" mass="21418">GLNDFQKQKIKFTFDFFLDYNKDGSIQWEDFEEMIKRYKEVNKGSLSDADYKSMQASLEDEWRDLKGRADINKDDVVSWEEYLAMWEKTIATCKSVADLPAWCQNRIPFLFKGMDVSGDGIVDLEEFQNYCKNFQLQCADVPAVYNVITDGGKVTFDLNRYKELYYRLLTSPAADAGNTLMGQKP</sequence>
<protein>
    <recommendedName>
        <fullName>Sarcoplasmic calcium-binding proteins I, III, and IV</fullName>
        <shortName>SCP I, III, IV</shortName>
    </recommendedName>
</protein>
<evidence type="ECO:0000255" key="1">
    <source>
        <dbReference type="PROSITE-ProRule" id="PRU00448"/>
    </source>
</evidence>
<accession>P04569</accession>
<dbReference type="PIR" id="B24479">
    <property type="entry name" value="B24479"/>
</dbReference>
<dbReference type="PIR" id="S13184">
    <property type="entry name" value="S13184"/>
</dbReference>
<dbReference type="PIR" id="S13185">
    <property type="entry name" value="S13185"/>
</dbReference>
<dbReference type="SMR" id="P04569"/>
<dbReference type="OrthoDB" id="427950at2759"/>
<dbReference type="GO" id="GO:0005509">
    <property type="term" value="F:calcium ion binding"/>
    <property type="evidence" value="ECO:0007669"/>
    <property type="project" value="InterPro"/>
</dbReference>
<dbReference type="Gene3D" id="1.10.238.10">
    <property type="entry name" value="EF-hand"/>
    <property type="match status" value="1"/>
</dbReference>
<dbReference type="InterPro" id="IPR011992">
    <property type="entry name" value="EF-hand-dom_pair"/>
</dbReference>
<dbReference type="InterPro" id="IPR018247">
    <property type="entry name" value="EF_Hand_1_Ca_BS"/>
</dbReference>
<dbReference type="InterPro" id="IPR002048">
    <property type="entry name" value="EF_hand_dom"/>
</dbReference>
<dbReference type="Pfam" id="PF13202">
    <property type="entry name" value="EF-hand_5"/>
    <property type="match status" value="1"/>
</dbReference>
<dbReference type="Pfam" id="PF13499">
    <property type="entry name" value="EF-hand_7"/>
    <property type="match status" value="1"/>
</dbReference>
<dbReference type="SUPFAM" id="SSF47473">
    <property type="entry name" value="EF-hand"/>
    <property type="match status" value="1"/>
</dbReference>
<dbReference type="PROSITE" id="PS00018">
    <property type="entry name" value="EF_HAND_1"/>
    <property type="match status" value="3"/>
</dbReference>
<dbReference type="PROSITE" id="PS50222">
    <property type="entry name" value="EF_HAND_2"/>
    <property type="match status" value="3"/>
</dbReference>
<reference key="1">
    <citation type="journal article" date="1986" name="Biochemistry">
        <title>Amino acid sequence of two sarcoplasmic calcium-binding proteins from the protochordate amphioxus.</title>
        <authorList>
            <person name="Takagi T."/>
            <person name="Konishi K."/>
            <person name="Cox J.A."/>
        </authorList>
    </citation>
    <scope>PROTEIN SEQUENCE (SCP I)</scope>
</reference>
<reference key="2">
    <citation type="journal article" date="1990" name="Eur. J. Biochem.">
        <title>Amino acid sequences of four isoforms of amphioxus sarcoplasmic calcium-binding proteins.</title>
        <authorList>
            <person name="Takagi T."/>
            <person name="Cox J.A."/>
        </authorList>
    </citation>
    <scope>PROTEIN SEQUENCE (SCP III AND IV)</scope>
    <scope>SEQUENCE REVISION (SCP I)</scope>
</reference>